<accession>A9WH62</accession>
<name>EFG_CHLAA</name>
<proteinExistence type="inferred from homology"/>
<keyword id="KW-0963">Cytoplasm</keyword>
<keyword id="KW-0251">Elongation factor</keyword>
<keyword id="KW-0342">GTP-binding</keyword>
<keyword id="KW-0547">Nucleotide-binding</keyword>
<keyword id="KW-0648">Protein biosynthesis</keyword>
<keyword id="KW-1185">Reference proteome</keyword>
<sequence length="702" mass="78313">MPRQIELDKVRNIGIIAHIDAGKTTTTERILFYTGRTYKIGEVHEGTATMDWMPQEQERGITITAAATTAPWRLDGVEYRINIIDTPGHVDFTVEVERSLRVLDGGVVVFDGVAGVEPQSETVWRQADKYNVPRICFVNKMDRVGASFERCVQMIKDRLGAKPAIVQLPIGVEDSFRGTIDLFKMKATVYYDDLGKDIREEEIPAELRPAAEQARNELIEMIAETDDELTLLYLEGQELTVEELKRGLRKATIERKLVPVLCGAALRNKGVQKLLDAVVEYLPSPLDRPAITGTLPGQVMGDEGVEVITRPVSDDAPFTALVFKIVADPYVGKLAYFRVYAGKITKGSYVLNSTRNQRERLGRILRMHANHREDIEEVYAGEIAAMVGPKNSYTGDTICDPDHPIVLESIRFPEPVIELAVEPKTKADQDKMSIALSRLAEEDPTFRVYTDPETGQTIIKGMGELHLEVILDRMRREYKVEANQGKPQVSYRETITIPVDQETRFVRQTGGKGQYGHVKIKFEPLPPGSGFEFVNAIVGGVIPKEYIPAVEQGLREAMQTGVIAGYPVVDVKATLYDGSYHEVDSSEMAFKIAASMCLKDAVRRGKPQLLEPIMKVETVTPEEFLGTVIGDFNSRRGRIEGMEARGNAQVVRAFVPLANMFGYMTDLRSATQGRATSSMEFDHYEPLPEALAKEIIEKRSAN</sequence>
<protein>
    <recommendedName>
        <fullName evidence="1">Elongation factor G</fullName>
        <shortName evidence="1">EF-G</shortName>
    </recommendedName>
</protein>
<organism>
    <name type="scientific">Chloroflexus aurantiacus (strain ATCC 29366 / DSM 635 / J-10-fl)</name>
    <dbReference type="NCBI Taxonomy" id="324602"/>
    <lineage>
        <taxon>Bacteria</taxon>
        <taxon>Bacillati</taxon>
        <taxon>Chloroflexota</taxon>
        <taxon>Chloroflexia</taxon>
        <taxon>Chloroflexales</taxon>
        <taxon>Chloroflexineae</taxon>
        <taxon>Chloroflexaceae</taxon>
        <taxon>Chloroflexus</taxon>
    </lineage>
</organism>
<comment type="function">
    <text evidence="1">Catalyzes the GTP-dependent ribosomal translocation step during translation elongation. During this step, the ribosome changes from the pre-translocational (PRE) to the post-translocational (POST) state as the newly formed A-site-bound peptidyl-tRNA and P-site-bound deacylated tRNA move to the P and E sites, respectively. Catalyzes the coordinated movement of the two tRNA molecules, the mRNA and conformational changes in the ribosome.</text>
</comment>
<comment type="subcellular location">
    <subcellularLocation>
        <location evidence="1">Cytoplasm</location>
    </subcellularLocation>
</comment>
<comment type="similarity">
    <text evidence="1">Belongs to the TRAFAC class translation factor GTPase superfamily. Classic translation factor GTPase family. EF-G/EF-2 subfamily.</text>
</comment>
<feature type="chain" id="PRO_1000074951" description="Elongation factor G">
    <location>
        <begin position="1"/>
        <end position="702"/>
    </location>
</feature>
<feature type="domain" description="tr-type G">
    <location>
        <begin position="8"/>
        <end position="286"/>
    </location>
</feature>
<feature type="binding site" evidence="1">
    <location>
        <begin position="17"/>
        <end position="24"/>
    </location>
    <ligand>
        <name>GTP</name>
        <dbReference type="ChEBI" id="CHEBI:37565"/>
    </ligand>
</feature>
<feature type="binding site" evidence="1">
    <location>
        <begin position="85"/>
        <end position="89"/>
    </location>
    <ligand>
        <name>GTP</name>
        <dbReference type="ChEBI" id="CHEBI:37565"/>
    </ligand>
</feature>
<feature type="binding site" evidence="1">
    <location>
        <begin position="139"/>
        <end position="142"/>
    </location>
    <ligand>
        <name>GTP</name>
        <dbReference type="ChEBI" id="CHEBI:37565"/>
    </ligand>
</feature>
<reference key="1">
    <citation type="journal article" date="2011" name="BMC Genomics">
        <title>Complete genome sequence of the filamentous anoxygenic phototrophic bacterium Chloroflexus aurantiacus.</title>
        <authorList>
            <person name="Tang K.H."/>
            <person name="Barry K."/>
            <person name="Chertkov O."/>
            <person name="Dalin E."/>
            <person name="Han C.S."/>
            <person name="Hauser L.J."/>
            <person name="Honchak B.M."/>
            <person name="Karbach L.E."/>
            <person name="Land M.L."/>
            <person name="Lapidus A."/>
            <person name="Larimer F.W."/>
            <person name="Mikhailova N."/>
            <person name="Pitluck S."/>
            <person name="Pierson B.K."/>
            <person name="Blankenship R.E."/>
        </authorList>
    </citation>
    <scope>NUCLEOTIDE SEQUENCE [LARGE SCALE GENOMIC DNA]</scope>
    <source>
        <strain>ATCC 29366 / DSM 635 / J-10-fl</strain>
    </source>
</reference>
<evidence type="ECO:0000255" key="1">
    <source>
        <dbReference type="HAMAP-Rule" id="MF_00054"/>
    </source>
</evidence>
<gene>
    <name evidence="1" type="primary">fusA</name>
    <name type="ordered locus">Caur_2365</name>
</gene>
<dbReference type="EMBL" id="CP000909">
    <property type="protein sequence ID" value="ABY35574.1"/>
    <property type="molecule type" value="Genomic_DNA"/>
</dbReference>
<dbReference type="RefSeq" id="WP_012258228.1">
    <property type="nucleotide sequence ID" value="NC_010175.1"/>
</dbReference>
<dbReference type="RefSeq" id="YP_001635963.1">
    <property type="nucleotide sequence ID" value="NC_010175.1"/>
</dbReference>
<dbReference type="SMR" id="A9WH62"/>
<dbReference type="FunCoup" id="A9WH62">
    <property type="interactions" value="518"/>
</dbReference>
<dbReference type="STRING" id="324602.Caur_2365"/>
<dbReference type="EnsemblBacteria" id="ABY35574">
    <property type="protein sequence ID" value="ABY35574"/>
    <property type="gene ID" value="Caur_2365"/>
</dbReference>
<dbReference type="KEGG" id="cau:Caur_2365"/>
<dbReference type="PATRIC" id="fig|324602.8.peg.2678"/>
<dbReference type="eggNOG" id="COG0480">
    <property type="taxonomic scope" value="Bacteria"/>
</dbReference>
<dbReference type="HOGENOM" id="CLU_002794_4_1_0"/>
<dbReference type="InParanoid" id="A9WH62"/>
<dbReference type="Proteomes" id="UP000002008">
    <property type="component" value="Chromosome"/>
</dbReference>
<dbReference type="GO" id="GO:0005737">
    <property type="term" value="C:cytoplasm"/>
    <property type="evidence" value="ECO:0007669"/>
    <property type="project" value="UniProtKB-SubCell"/>
</dbReference>
<dbReference type="GO" id="GO:0005525">
    <property type="term" value="F:GTP binding"/>
    <property type="evidence" value="ECO:0007669"/>
    <property type="project" value="UniProtKB-UniRule"/>
</dbReference>
<dbReference type="GO" id="GO:0003924">
    <property type="term" value="F:GTPase activity"/>
    <property type="evidence" value="ECO:0007669"/>
    <property type="project" value="InterPro"/>
</dbReference>
<dbReference type="GO" id="GO:0003746">
    <property type="term" value="F:translation elongation factor activity"/>
    <property type="evidence" value="ECO:0007669"/>
    <property type="project" value="UniProtKB-UniRule"/>
</dbReference>
<dbReference type="GO" id="GO:0032790">
    <property type="term" value="P:ribosome disassembly"/>
    <property type="evidence" value="ECO:0000318"/>
    <property type="project" value="GO_Central"/>
</dbReference>
<dbReference type="CDD" id="cd01886">
    <property type="entry name" value="EF-G"/>
    <property type="match status" value="1"/>
</dbReference>
<dbReference type="CDD" id="cd16262">
    <property type="entry name" value="EFG_III"/>
    <property type="match status" value="1"/>
</dbReference>
<dbReference type="CDD" id="cd01434">
    <property type="entry name" value="EFG_mtEFG1_IV"/>
    <property type="match status" value="1"/>
</dbReference>
<dbReference type="CDD" id="cd03713">
    <property type="entry name" value="EFG_mtEFG_C"/>
    <property type="match status" value="1"/>
</dbReference>
<dbReference type="CDD" id="cd04088">
    <property type="entry name" value="EFG_mtEFG_II"/>
    <property type="match status" value="1"/>
</dbReference>
<dbReference type="FunFam" id="2.40.30.10:FF:000006">
    <property type="entry name" value="Elongation factor G"/>
    <property type="match status" value="1"/>
</dbReference>
<dbReference type="FunFam" id="3.30.230.10:FF:000003">
    <property type="entry name" value="Elongation factor G"/>
    <property type="match status" value="1"/>
</dbReference>
<dbReference type="FunFam" id="3.30.70.240:FF:000001">
    <property type="entry name" value="Elongation factor G"/>
    <property type="match status" value="1"/>
</dbReference>
<dbReference type="FunFam" id="3.30.70.870:FF:000001">
    <property type="entry name" value="Elongation factor G"/>
    <property type="match status" value="1"/>
</dbReference>
<dbReference type="FunFam" id="3.40.50.300:FF:000029">
    <property type="entry name" value="Elongation factor G"/>
    <property type="match status" value="1"/>
</dbReference>
<dbReference type="Gene3D" id="3.30.230.10">
    <property type="match status" value="1"/>
</dbReference>
<dbReference type="Gene3D" id="3.30.70.240">
    <property type="match status" value="1"/>
</dbReference>
<dbReference type="Gene3D" id="3.30.70.870">
    <property type="entry name" value="Elongation Factor G (Translational Gtpase), domain 3"/>
    <property type="match status" value="1"/>
</dbReference>
<dbReference type="Gene3D" id="3.40.50.300">
    <property type="entry name" value="P-loop containing nucleotide triphosphate hydrolases"/>
    <property type="match status" value="1"/>
</dbReference>
<dbReference type="Gene3D" id="2.40.30.10">
    <property type="entry name" value="Translation factors"/>
    <property type="match status" value="1"/>
</dbReference>
<dbReference type="HAMAP" id="MF_00054_B">
    <property type="entry name" value="EF_G_EF_2_B"/>
    <property type="match status" value="1"/>
</dbReference>
<dbReference type="InterPro" id="IPR053905">
    <property type="entry name" value="EF-G-like_DII"/>
</dbReference>
<dbReference type="InterPro" id="IPR041095">
    <property type="entry name" value="EFG_II"/>
</dbReference>
<dbReference type="InterPro" id="IPR009022">
    <property type="entry name" value="EFG_III"/>
</dbReference>
<dbReference type="InterPro" id="IPR035647">
    <property type="entry name" value="EFG_III/V"/>
</dbReference>
<dbReference type="InterPro" id="IPR047872">
    <property type="entry name" value="EFG_IV"/>
</dbReference>
<dbReference type="InterPro" id="IPR035649">
    <property type="entry name" value="EFG_V"/>
</dbReference>
<dbReference type="InterPro" id="IPR000640">
    <property type="entry name" value="EFG_V-like"/>
</dbReference>
<dbReference type="InterPro" id="IPR031157">
    <property type="entry name" value="G_TR_CS"/>
</dbReference>
<dbReference type="InterPro" id="IPR027417">
    <property type="entry name" value="P-loop_NTPase"/>
</dbReference>
<dbReference type="InterPro" id="IPR020568">
    <property type="entry name" value="Ribosomal_Su5_D2-typ_SF"/>
</dbReference>
<dbReference type="InterPro" id="IPR014721">
    <property type="entry name" value="Ribsml_uS5_D2-typ_fold_subgr"/>
</dbReference>
<dbReference type="InterPro" id="IPR005225">
    <property type="entry name" value="Small_GTP-bd"/>
</dbReference>
<dbReference type="InterPro" id="IPR000795">
    <property type="entry name" value="T_Tr_GTP-bd_dom"/>
</dbReference>
<dbReference type="InterPro" id="IPR009000">
    <property type="entry name" value="Transl_B-barrel_sf"/>
</dbReference>
<dbReference type="InterPro" id="IPR004540">
    <property type="entry name" value="Transl_elong_EFG/EF2"/>
</dbReference>
<dbReference type="InterPro" id="IPR005517">
    <property type="entry name" value="Transl_elong_EFG/EF2_IV"/>
</dbReference>
<dbReference type="NCBIfam" id="TIGR00484">
    <property type="entry name" value="EF-G"/>
    <property type="match status" value="1"/>
</dbReference>
<dbReference type="NCBIfam" id="NF009379">
    <property type="entry name" value="PRK12740.1-3"/>
    <property type="match status" value="1"/>
</dbReference>
<dbReference type="NCBIfam" id="NF009381">
    <property type="entry name" value="PRK12740.1-5"/>
    <property type="match status" value="1"/>
</dbReference>
<dbReference type="NCBIfam" id="TIGR00231">
    <property type="entry name" value="small_GTP"/>
    <property type="match status" value="1"/>
</dbReference>
<dbReference type="PANTHER" id="PTHR43261:SF1">
    <property type="entry name" value="RIBOSOME-RELEASING FACTOR 2, MITOCHONDRIAL"/>
    <property type="match status" value="1"/>
</dbReference>
<dbReference type="PANTHER" id="PTHR43261">
    <property type="entry name" value="TRANSLATION ELONGATION FACTOR G-RELATED"/>
    <property type="match status" value="1"/>
</dbReference>
<dbReference type="Pfam" id="PF22042">
    <property type="entry name" value="EF-G_D2"/>
    <property type="match status" value="1"/>
</dbReference>
<dbReference type="Pfam" id="PF00679">
    <property type="entry name" value="EFG_C"/>
    <property type="match status" value="1"/>
</dbReference>
<dbReference type="Pfam" id="PF14492">
    <property type="entry name" value="EFG_III"/>
    <property type="match status" value="1"/>
</dbReference>
<dbReference type="Pfam" id="PF03764">
    <property type="entry name" value="EFG_IV"/>
    <property type="match status" value="1"/>
</dbReference>
<dbReference type="Pfam" id="PF00009">
    <property type="entry name" value="GTP_EFTU"/>
    <property type="match status" value="1"/>
</dbReference>
<dbReference type="PRINTS" id="PR00315">
    <property type="entry name" value="ELONGATNFCT"/>
</dbReference>
<dbReference type="SMART" id="SM00838">
    <property type="entry name" value="EFG_C"/>
    <property type="match status" value="1"/>
</dbReference>
<dbReference type="SMART" id="SM00889">
    <property type="entry name" value="EFG_IV"/>
    <property type="match status" value="1"/>
</dbReference>
<dbReference type="SUPFAM" id="SSF54980">
    <property type="entry name" value="EF-G C-terminal domain-like"/>
    <property type="match status" value="2"/>
</dbReference>
<dbReference type="SUPFAM" id="SSF52540">
    <property type="entry name" value="P-loop containing nucleoside triphosphate hydrolases"/>
    <property type="match status" value="1"/>
</dbReference>
<dbReference type="SUPFAM" id="SSF54211">
    <property type="entry name" value="Ribosomal protein S5 domain 2-like"/>
    <property type="match status" value="1"/>
</dbReference>
<dbReference type="SUPFAM" id="SSF50447">
    <property type="entry name" value="Translation proteins"/>
    <property type="match status" value="1"/>
</dbReference>
<dbReference type="PROSITE" id="PS00301">
    <property type="entry name" value="G_TR_1"/>
    <property type="match status" value="1"/>
</dbReference>
<dbReference type="PROSITE" id="PS51722">
    <property type="entry name" value="G_TR_2"/>
    <property type="match status" value="1"/>
</dbReference>